<dbReference type="EMBL" id="AC127693">
    <property type="status" value="NOT_ANNOTATED_CDS"/>
    <property type="molecule type" value="Genomic_DNA"/>
</dbReference>
<dbReference type="EMBL" id="CH466537">
    <property type="protein sequence ID" value="EDL38356.1"/>
    <property type="molecule type" value="Genomic_DNA"/>
</dbReference>
<dbReference type="CCDS" id="CCDS50171.1"/>
<dbReference type="RefSeq" id="NP_001138664.1">
    <property type="nucleotide sequence ID" value="NM_001145192.1"/>
</dbReference>
<dbReference type="SMR" id="G3UWD5"/>
<dbReference type="FunCoup" id="G3UWD5">
    <property type="interactions" value="185"/>
</dbReference>
<dbReference type="STRING" id="10090.ENSMUSP00000131134"/>
<dbReference type="PaxDb" id="10090-ENSMUSP00000131134"/>
<dbReference type="ProteomicsDB" id="285796"/>
<dbReference type="Antibodypedia" id="62516">
    <property type="antibodies" value="10 antibodies from 8 providers"/>
</dbReference>
<dbReference type="Ensembl" id="ENSMUST00000169935.2">
    <property type="protein sequence ID" value="ENSMUSP00000131134.2"/>
    <property type="gene ID" value="ENSMUSG00000091636.3"/>
</dbReference>
<dbReference type="GeneID" id="320722"/>
<dbReference type="KEGG" id="mmu:320722"/>
<dbReference type="UCSC" id="uc008dkx.2">
    <property type="organism name" value="mouse"/>
</dbReference>
<dbReference type="AGR" id="MGI:2444600"/>
<dbReference type="CTD" id="642597"/>
<dbReference type="MGI" id="MGI:2444600">
    <property type="gene designation" value="Akain1"/>
</dbReference>
<dbReference type="VEuPathDB" id="HostDB:ENSMUSG00000091636"/>
<dbReference type="eggNOG" id="ENOG502SEI0">
    <property type="taxonomic scope" value="Eukaryota"/>
</dbReference>
<dbReference type="GeneTree" id="ENSGT00560000078638"/>
<dbReference type="HOGENOM" id="CLU_2782380_0_0_1"/>
<dbReference type="InParanoid" id="G3UWD5"/>
<dbReference type="OMA" id="CELTKKH"/>
<dbReference type="OrthoDB" id="9886207at2759"/>
<dbReference type="BioGRID-ORCS" id="320722">
    <property type="hits" value="1 hit in 76 CRISPR screens"/>
</dbReference>
<dbReference type="PRO" id="PR:G3UWD5"/>
<dbReference type="Proteomes" id="UP000000589">
    <property type="component" value="Chromosome 17"/>
</dbReference>
<dbReference type="RNAct" id="G3UWD5">
    <property type="molecule type" value="protein"/>
</dbReference>
<dbReference type="Bgee" id="ENSMUSG00000091636">
    <property type="expression patterns" value="Expressed in facial nucleus and 34 other cell types or tissues"/>
</dbReference>
<dbReference type="GO" id="GO:0005829">
    <property type="term" value="C:cytosol"/>
    <property type="evidence" value="ECO:0000314"/>
    <property type="project" value="MGI"/>
</dbReference>
<dbReference type="GO" id="GO:0051018">
    <property type="term" value="F:protein kinase A binding"/>
    <property type="evidence" value="ECO:0000314"/>
    <property type="project" value="MGI"/>
</dbReference>
<dbReference type="GO" id="GO:0031333">
    <property type="term" value="P:negative regulation of protein-containing complex assembly"/>
    <property type="evidence" value="ECO:0000314"/>
    <property type="project" value="MGI"/>
</dbReference>
<dbReference type="GO" id="GO:0008104">
    <property type="term" value="P:protein localization"/>
    <property type="evidence" value="ECO:0000250"/>
    <property type="project" value="UniProtKB"/>
</dbReference>
<dbReference type="GO" id="GO:0065003">
    <property type="term" value="P:protein-containing complex assembly"/>
    <property type="evidence" value="ECO:0000314"/>
    <property type="project" value="MGI"/>
</dbReference>
<sequence>MVFAPGEKSGKELEEVKLQNTSKQIVQNAILQAMRQVSQESLRREGRPGDSRAWGQLGGCELTKKHEKK</sequence>
<feature type="chain" id="PRO_0000432849" description="A-kinase anchor protein inhibitor 1">
    <location>
        <begin position="1"/>
        <end position="69"/>
    </location>
</feature>
<feature type="region of interest" description="Disordered" evidence="2">
    <location>
        <begin position="39"/>
        <end position="69"/>
    </location>
</feature>
<feature type="compositionally biased region" description="Basic and acidic residues" evidence="2">
    <location>
        <begin position="41"/>
        <end position="50"/>
    </location>
</feature>
<keyword id="KW-1185">Reference proteome</keyword>
<name>AKAI1_MOUSE</name>
<accession>G3UWD5</accession>
<reference key="1">
    <citation type="journal article" date="2009" name="PLoS Biol.">
        <title>Lineage-specific biology revealed by a finished genome assembly of the mouse.</title>
        <authorList>
            <person name="Church D.M."/>
            <person name="Goodstadt L."/>
            <person name="Hillier L.W."/>
            <person name="Zody M.C."/>
            <person name="Goldstein S."/>
            <person name="She X."/>
            <person name="Bult C.J."/>
            <person name="Agarwala R."/>
            <person name="Cherry J.L."/>
            <person name="DiCuccio M."/>
            <person name="Hlavina W."/>
            <person name="Kapustin Y."/>
            <person name="Meric P."/>
            <person name="Maglott D."/>
            <person name="Birtle Z."/>
            <person name="Marques A.C."/>
            <person name="Graves T."/>
            <person name="Zhou S."/>
            <person name="Teague B."/>
            <person name="Potamousis K."/>
            <person name="Churas C."/>
            <person name="Place M."/>
            <person name="Herschleb J."/>
            <person name="Runnheim R."/>
            <person name="Forrest D."/>
            <person name="Amos-Landgraf J."/>
            <person name="Schwartz D.C."/>
            <person name="Cheng Z."/>
            <person name="Lindblad-Toh K."/>
            <person name="Eichler E.E."/>
            <person name="Ponting C.P."/>
        </authorList>
    </citation>
    <scope>NUCLEOTIDE SEQUENCE [LARGE SCALE GENOMIC DNA]</scope>
    <source>
        <strain>C57BL/6J</strain>
    </source>
</reference>
<reference key="2">
    <citation type="submission" date="2005-07" db="EMBL/GenBank/DDBJ databases">
        <authorList>
            <person name="Mural R.J."/>
            <person name="Adams M.D."/>
            <person name="Myers E.W."/>
            <person name="Smith H.O."/>
            <person name="Venter J.C."/>
        </authorList>
    </citation>
    <scope>NUCLEOTIDE SEQUENCE [LARGE SCALE GENOMIC DNA]</scope>
</reference>
<reference key="3">
    <citation type="journal article" date="2015" name="Genes Cells">
        <title>Hypothetical gene C18orf42 encodes a novel protein kinase A-binding protein.</title>
        <authorList>
            <person name="Fukuda M."/>
            <person name="Aizawa Y."/>
        </authorList>
    </citation>
    <scope>TISSUE SPECIFICITY</scope>
</reference>
<comment type="function">
    <text evidence="1">Protein kinase A (PKA)-binding protein. Binds to type II regulatory subunits of protein kinase A (PKA) and may block the A-kinase anchoring protein (AKAP)-mediated subcellular localization of PKA.</text>
</comment>
<comment type="subunit">
    <text evidence="1">Binds cAMP-dependent protein kinase (PKA). Interacts specifically with RII-regulatory subunits of PKA (PRKAR2A and PRKAR2B).</text>
</comment>
<comment type="tissue specificity">
    <text evidence="3">Preferentially expressed in the neural tissues.</text>
</comment>
<comment type="domain">
    <text>The RII-alpha binding site, predicted to form an amphipathic helix, could participate in protein-protein interactions with a complementary surface on the R-subunit dimer.</text>
</comment>
<gene>
    <name evidence="4" type="primary">Akain1</name>
</gene>
<organism>
    <name type="scientific">Mus musculus</name>
    <name type="common">Mouse</name>
    <dbReference type="NCBI Taxonomy" id="10090"/>
    <lineage>
        <taxon>Eukaryota</taxon>
        <taxon>Metazoa</taxon>
        <taxon>Chordata</taxon>
        <taxon>Craniata</taxon>
        <taxon>Vertebrata</taxon>
        <taxon>Euteleostomi</taxon>
        <taxon>Mammalia</taxon>
        <taxon>Eutheria</taxon>
        <taxon>Euarchontoglires</taxon>
        <taxon>Glires</taxon>
        <taxon>Rodentia</taxon>
        <taxon>Myomorpha</taxon>
        <taxon>Muroidea</taxon>
        <taxon>Muridae</taxon>
        <taxon>Murinae</taxon>
        <taxon>Mus</taxon>
        <taxon>Mus</taxon>
    </lineage>
</organism>
<evidence type="ECO:0000250" key="1">
    <source>
        <dbReference type="UniProtKB" id="P0CW23"/>
    </source>
</evidence>
<evidence type="ECO:0000256" key="2">
    <source>
        <dbReference type="SAM" id="MobiDB-lite"/>
    </source>
</evidence>
<evidence type="ECO:0000269" key="3">
    <source>
    </source>
</evidence>
<evidence type="ECO:0000312" key="4">
    <source>
        <dbReference type="MGI" id="MGI:2444600"/>
    </source>
</evidence>
<proteinExistence type="evidence at transcript level"/>
<protein>
    <recommendedName>
        <fullName>A-kinase anchor protein inhibitor 1</fullName>
    </recommendedName>
</protein>